<gene>
    <name type="primary">sodC</name>
    <name type="ORF">AO090020000521</name>
</gene>
<keyword id="KW-0049">Antioxidant</keyword>
<keyword id="KW-0186">Copper</keyword>
<keyword id="KW-0963">Cytoplasm</keyword>
<keyword id="KW-1015">Disulfide bond</keyword>
<keyword id="KW-0479">Metal-binding</keyword>
<keyword id="KW-0560">Oxidoreductase</keyword>
<keyword id="KW-1185">Reference proteome</keyword>
<keyword id="KW-0862">Zinc</keyword>
<organism>
    <name type="scientific">Aspergillus oryzae (strain ATCC 42149 / RIB 40)</name>
    <name type="common">Yellow koji mold</name>
    <dbReference type="NCBI Taxonomy" id="510516"/>
    <lineage>
        <taxon>Eukaryota</taxon>
        <taxon>Fungi</taxon>
        <taxon>Dikarya</taxon>
        <taxon>Ascomycota</taxon>
        <taxon>Pezizomycotina</taxon>
        <taxon>Eurotiomycetes</taxon>
        <taxon>Eurotiomycetidae</taxon>
        <taxon>Eurotiales</taxon>
        <taxon>Aspergillaceae</taxon>
        <taxon>Aspergillus</taxon>
        <taxon>Aspergillus subgen. Circumdati</taxon>
    </lineage>
</organism>
<dbReference type="EC" id="1.15.1.1" evidence="3"/>
<dbReference type="EMBL" id="AB078725">
    <property type="protein sequence ID" value="BAC56176.1"/>
    <property type="molecule type" value="Genomic_DNA"/>
</dbReference>
<dbReference type="EMBL" id="BA000054">
    <property type="protein sequence ID" value="BAE63690.1"/>
    <property type="molecule type" value="Genomic_DNA"/>
</dbReference>
<dbReference type="RefSeq" id="XP_001824823.1">
    <property type="nucleotide sequence ID" value="XM_001824771.2"/>
</dbReference>
<dbReference type="SMR" id="Q877B5"/>
<dbReference type="STRING" id="510516.Q877B5"/>
<dbReference type="EnsemblFungi" id="BAE63690">
    <property type="protein sequence ID" value="BAE63690"/>
    <property type="gene ID" value="AO090020000521"/>
</dbReference>
<dbReference type="GeneID" id="5996909"/>
<dbReference type="KEGG" id="aor:AO090020000521"/>
<dbReference type="VEuPathDB" id="FungiDB:AO090020000521"/>
<dbReference type="HOGENOM" id="CLU_056632_4_1_1"/>
<dbReference type="OMA" id="AQRGFHI"/>
<dbReference type="OrthoDB" id="21305at5052"/>
<dbReference type="Proteomes" id="UP000006564">
    <property type="component" value="Chromosome 6"/>
</dbReference>
<dbReference type="GO" id="GO:0005829">
    <property type="term" value="C:cytosol"/>
    <property type="evidence" value="ECO:0007669"/>
    <property type="project" value="EnsemblFungi"/>
</dbReference>
<dbReference type="GO" id="GO:0005758">
    <property type="term" value="C:mitochondrial intermembrane space"/>
    <property type="evidence" value="ECO:0007669"/>
    <property type="project" value="EnsemblFungi"/>
</dbReference>
<dbReference type="GO" id="GO:0005634">
    <property type="term" value="C:nucleus"/>
    <property type="evidence" value="ECO:0007669"/>
    <property type="project" value="EnsemblFungi"/>
</dbReference>
<dbReference type="GO" id="GO:1902693">
    <property type="term" value="C:superoxide dismutase complex"/>
    <property type="evidence" value="ECO:0007669"/>
    <property type="project" value="EnsemblFungi"/>
</dbReference>
<dbReference type="GO" id="GO:0005507">
    <property type="term" value="F:copper ion binding"/>
    <property type="evidence" value="ECO:0007669"/>
    <property type="project" value="InterPro"/>
</dbReference>
<dbReference type="GO" id="GO:0016670">
    <property type="term" value="F:oxidoreductase activity, acting on a sulfur group of donors, oxygen as acceptor"/>
    <property type="evidence" value="ECO:0007669"/>
    <property type="project" value="EnsemblFungi"/>
</dbReference>
<dbReference type="GO" id="GO:0004784">
    <property type="term" value="F:superoxide dismutase activity"/>
    <property type="evidence" value="ECO:0007669"/>
    <property type="project" value="UniProtKB-EC"/>
</dbReference>
<dbReference type="GO" id="GO:0045454">
    <property type="term" value="P:cell redox homeostasis"/>
    <property type="evidence" value="ECO:0007669"/>
    <property type="project" value="EnsemblFungi"/>
</dbReference>
<dbReference type="GO" id="GO:0006825">
    <property type="term" value="P:copper ion transport"/>
    <property type="evidence" value="ECO:0007669"/>
    <property type="project" value="EnsemblFungi"/>
</dbReference>
<dbReference type="GO" id="GO:0031505">
    <property type="term" value="P:fungal-type cell wall organization"/>
    <property type="evidence" value="ECO:0007669"/>
    <property type="project" value="EnsemblFungi"/>
</dbReference>
<dbReference type="GO" id="GO:0006878">
    <property type="term" value="P:intracellular copper ion homeostasis"/>
    <property type="evidence" value="ECO:0007669"/>
    <property type="project" value="EnsemblFungi"/>
</dbReference>
<dbReference type="GO" id="GO:0006882">
    <property type="term" value="P:intracellular zinc ion homeostasis"/>
    <property type="evidence" value="ECO:0007669"/>
    <property type="project" value="EnsemblFungi"/>
</dbReference>
<dbReference type="GO" id="GO:1901856">
    <property type="term" value="P:negative regulation of cellular respiration"/>
    <property type="evidence" value="ECO:0007669"/>
    <property type="project" value="EnsemblFungi"/>
</dbReference>
<dbReference type="GO" id="GO:0045944">
    <property type="term" value="P:positive regulation of transcription by RNA polymerase II"/>
    <property type="evidence" value="ECO:0007669"/>
    <property type="project" value="EnsemblFungi"/>
</dbReference>
<dbReference type="GO" id="GO:0050821">
    <property type="term" value="P:protein stabilization"/>
    <property type="evidence" value="ECO:0007669"/>
    <property type="project" value="EnsemblFungi"/>
</dbReference>
<dbReference type="CDD" id="cd00305">
    <property type="entry name" value="Cu-Zn_Superoxide_Dismutase"/>
    <property type="match status" value="1"/>
</dbReference>
<dbReference type="FunFam" id="2.60.40.200:FF:000001">
    <property type="entry name" value="Superoxide dismutase [Cu-Zn]"/>
    <property type="match status" value="1"/>
</dbReference>
<dbReference type="Gene3D" id="2.60.40.200">
    <property type="entry name" value="Superoxide dismutase, copper/zinc binding domain"/>
    <property type="match status" value="1"/>
</dbReference>
<dbReference type="InterPro" id="IPR036423">
    <property type="entry name" value="SOD-like_Cu/Zn_dom_sf"/>
</dbReference>
<dbReference type="InterPro" id="IPR024134">
    <property type="entry name" value="SOD_Cu/Zn_/chaperone"/>
</dbReference>
<dbReference type="InterPro" id="IPR018152">
    <property type="entry name" value="SOD_Cu/Zn_BS"/>
</dbReference>
<dbReference type="InterPro" id="IPR001424">
    <property type="entry name" value="SOD_Cu_Zn_dom"/>
</dbReference>
<dbReference type="PANTHER" id="PTHR10003">
    <property type="entry name" value="SUPEROXIDE DISMUTASE CU-ZN -RELATED"/>
    <property type="match status" value="1"/>
</dbReference>
<dbReference type="Pfam" id="PF00080">
    <property type="entry name" value="Sod_Cu"/>
    <property type="match status" value="1"/>
</dbReference>
<dbReference type="PRINTS" id="PR00068">
    <property type="entry name" value="CUZNDISMTASE"/>
</dbReference>
<dbReference type="SUPFAM" id="SSF49329">
    <property type="entry name" value="Cu,Zn superoxide dismutase-like"/>
    <property type="match status" value="1"/>
</dbReference>
<dbReference type="PROSITE" id="PS00087">
    <property type="entry name" value="SOD_CU_ZN_1"/>
    <property type="match status" value="1"/>
</dbReference>
<dbReference type="PROSITE" id="PS00332">
    <property type="entry name" value="SOD_CU_ZN_2"/>
    <property type="match status" value="1"/>
</dbReference>
<feature type="initiator methionine" description="Removed" evidence="2">
    <location>
        <position position="1"/>
    </location>
</feature>
<feature type="chain" id="PRO_0000164110" description="Superoxide dismutase [Cu-Zn]">
    <location>
        <begin position="2"/>
        <end position="154"/>
    </location>
</feature>
<feature type="region of interest" description="Disordered" evidence="4">
    <location>
        <begin position="125"/>
        <end position="144"/>
    </location>
</feature>
<feature type="compositionally biased region" description="Basic and acidic residues" evidence="4">
    <location>
        <begin position="125"/>
        <end position="137"/>
    </location>
</feature>
<feature type="binding site" evidence="2">
    <location>
        <position position="47"/>
    </location>
    <ligand>
        <name>Cu cation</name>
        <dbReference type="ChEBI" id="CHEBI:23378"/>
        <note>catalytic</note>
    </ligand>
</feature>
<feature type="binding site" evidence="2">
    <location>
        <position position="49"/>
    </location>
    <ligand>
        <name>Cu cation</name>
        <dbReference type="ChEBI" id="CHEBI:23378"/>
        <note>catalytic</note>
    </ligand>
</feature>
<feature type="binding site" evidence="2">
    <location>
        <position position="64"/>
    </location>
    <ligand>
        <name>Cu cation</name>
        <dbReference type="ChEBI" id="CHEBI:23378"/>
        <note>catalytic</note>
    </ligand>
</feature>
<feature type="binding site" evidence="2">
    <location>
        <position position="64"/>
    </location>
    <ligand>
        <name>Zn(2+)</name>
        <dbReference type="ChEBI" id="CHEBI:29105"/>
        <note>structural</note>
    </ligand>
</feature>
<feature type="binding site" evidence="2">
    <location>
        <position position="72"/>
    </location>
    <ligand>
        <name>Zn(2+)</name>
        <dbReference type="ChEBI" id="CHEBI:29105"/>
        <note>structural</note>
    </ligand>
</feature>
<feature type="binding site" evidence="2">
    <location>
        <position position="81"/>
    </location>
    <ligand>
        <name>Zn(2+)</name>
        <dbReference type="ChEBI" id="CHEBI:29105"/>
        <note>structural</note>
    </ligand>
</feature>
<feature type="binding site" evidence="2">
    <location>
        <position position="84"/>
    </location>
    <ligand>
        <name>Zn(2+)</name>
        <dbReference type="ChEBI" id="CHEBI:29105"/>
        <note>structural</note>
    </ligand>
</feature>
<feature type="binding site" evidence="2">
    <location>
        <position position="121"/>
    </location>
    <ligand>
        <name>Cu cation</name>
        <dbReference type="ChEBI" id="CHEBI:23378"/>
        <note>catalytic</note>
    </ligand>
</feature>
<feature type="binding site" evidence="2">
    <location>
        <position position="144"/>
    </location>
    <ligand>
        <name>substrate</name>
    </ligand>
</feature>
<feature type="disulfide bond" evidence="2">
    <location>
        <begin position="58"/>
        <end position="147"/>
    </location>
</feature>
<proteinExistence type="inferred from homology"/>
<evidence type="ECO:0000250" key="1">
    <source>
        <dbReference type="UniProtKB" id="P00442"/>
    </source>
</evidence>
<evidence type="ECO:0000250" key="2">
    <source>
        <dbReference type="UniProtKB" id="P00445"/>
    </source>
</evidence>
<evidence type="ECO:0000250" key="3">
    <source>
        <dbReference type="UniProtKB" id="P85978"/>
    </source>
</evidence>
<evidence type="ECO:0000256" key="4">
    <source>
        <dbReference type="SAM" id="MobiDB-lite"/>
    </source>
</evidence>
<evidence type="ECO:0000305" key="5"/>
<reference key="1">
    <citation type="submission" date="2002-01" db="EMBL/GenBank/DDBJ databases">
        <title>Cu,Zn superoxide dismutase-encoding gene of Aspergillus oryzae.</title>
        <authorList>
            <person name="Ishida H."/>
            <person name="Hata Y."/>
            <person name="Kawato A."/>
            <person name="Suginami K."/>
            <person name="Abe Y."/>
        </authorList>
    </citation>
    <scope>NUCLEOTIDE SEQUENCE [GENOMIC DNA]</scope>
</reference>
<reference key="2">
    <citation type="journal article" date="2005" name="Nature">
        <title>Genome sequencing and analysis of Aspergillus oryzae.</title>
        <authorList>
            <person name="Machida M."/>
            <person name="Asai K."/>
            <person name="Sano M."/>
            <person name="Tanaka T."/>
            <person name="Kumagai T."/>
            <person name="Terai G."/>
            <person name="Kusumoto K."/>
            <person name="Arima T."/>
            <person name="Akita O."/>
            <person name="Kashiwagi Y."/>
            <person name="Abe K."/>
            <person name="Gomi K."/>
            <person name="Horiuchi H."/>
            <person name="Kitamoto K."/>
            <person name="Kobayashi T."/>
            <person name="Takeuchi M."/>
            <person name="Denning D.W."/>
            <person name="Galagan J.E."/>
            <person name="Nierman W.C."/>
            <person name="Yu J."/>
            <person name="Archer D.B."/>
            <person name="Bennett J.W."/>
            <person name="Bhatnagar D."/>
            <person name="Cleveland T.E."/>
            <person name="Fedorova N.D."/>
            <person name="Gotoh O."/>
            <person name="Horikawa H."/>
            <person name="Hosoyama A."/>
            <person name="Ichinomiya M."/>
            <person name="Igarashi R."/>
            <person name="Iwashita K."/>
            <person name="Juvvadi P.R."/>
            <person name="Kato M."/>
            <person name="Kato Y."/>
            <person name="Kin T."/>
            <person name="Kokubun A."/>
            <person name="Maeda H."/>
            <person name="Maeyama N."/>
            <person name="Maruyama J."/>
            <person name="Nagasaki H."/>
            <person name="Nakajima T."/>
            <person name="Oda K."/>
            <person name="Okada K."/>
            <person name="Paulsen I."/>
            <person name="Sakamoto K."/>
            <person name="Sawano T."/>
            <person name="Takahashi M."/>
            <person name="Takase K."/>
            <person name="Terabayashi Y."/>
            <person name="Wortman J.R."/>
            <person name="Yamada O."/>
            <person name="Yamagata Y."/>
            <person name="Anazawa H."/>
            <person name="Hata Y."/>
            <person name="Koide Y."/>
            <person name="Komori T."/>
            <person name="Koyama Y."/>
            <person name="Minetoki T."/>
            <person name="Suharnan S."/>
            <person name="Tanaka A."/>
            <person name="Isono K."/>
            <person name="Kuhara S."/>
            <person name="Ogasawara N."/>
            <person name="Kikuchi H."/>
        </authorList>
    </citation>
    <scope>NUCLEOTIDE SEQUENCE [LARGE SCALE GENOMIC DNA]</scope>
    <source>
        <strain>ATCC 42149 / RIB 40</strain>
    </source>
</reference>
<protein>
    <recommendedName>
        <fullName>Superoxide dismutase [Cu-Zn]</fullName>
        <ecNumber evidence="3">1.15.1.1</ecNumber>
    </recommendedName>
</protein>
<comment type="function">
    <text evidence="1">Destroys radicals which are normally produced within the cells and which are toxic to biological systems.</text>
</comment>
<comment type="catalytic activity">
    <reaction evidence="3">
        <text>2 superoxide + 2 H(+) = H2O2 + O2</text>
        <dbReference type="Rhea" id="RHEA:20696"/>
        <dbReference type="ChEBI" id="CHEBI:15378"/>
        <dbReference type="ChEBI" id="CHEBI:15379"/>
        <dbReference type="ChEBI" id="CHEBI:16240"/>
        <dbReference type="ChEBI" id="CHEBI:18421"/>
        <dbReference type="EC" id="1.15.1.1"/>
    </reaction>
</comment>
<comment type="cofactor">
    <cofactor evidence="2">
        <name>Cu cation</name>
        <dbReference type="ChEBI" id="CHEBI:23378"/>
    </cofactor>
    <text evidence="2">Binds 1 copper ion per subunit.</text>
</comment>
<comment type="cofactor">
    <cofactor evidence="2">
        <name>Zn(2+)</name>
        <dbReference type="ChEBI" id="CHEBI:29105"/>
    </cofactor>
    <text evidence="2">Binds 1 zinc ion per subunit.</text>
</comment>
<comment type="subunit">
    <text evidence="3">Homodimer.</text>
</comment>
<comment type="subcellular location">
    <subcellularLocation>
        <location evidence="2">Cytoplasm</location>
    </subcellularLocation>
</comment>
<comment type="similarity">
    <text evidence="5">Belongs to the Cu-Zn superoxide dismutase family.</text>
</comment>
<sequence>MVKAVAVLRGDSKISGTVTFEQADANAPTTVSWNITGHDANAERAFHVHQFGDNTNGCTSAGPHFNPFGKEHGAPEDENRHVGDLGNFKTDAEGNAVGSKQDKLIKLIGAESVLGRTLVIHAGTDDLGRSEHPESKKTGNAGARPACGVIGIAA</sequence>
<name>SODC_ASPOR</name>
<accession>Q877B5</accession>
<accession>Q2U425</accession>